<accession>P20189</accession>
<evidence type="ECO:0000256" key="1">
    <source>
        <dbReference type="SAM" id="MobiDB-lite"/>
    </source>
</evidence>
<evidence type="ECO:0000305" key="2"/>
<proteinExistence type="inferred from homology"/>
<keyword id="KW-0233">DNA recombination</keyword>
<keyword id="KW-0238">DNA-binding</keyword>
<keyword id="KW-0814">Transposable element</keyword>
<keyword id="KW-0815">Transposition</keyword>
<dbReference type="EMBL" id="M29297">
    <property type="protein sequence ID" value="AAA88563.1"/>
    <property type="molecule type" value="Genomic_DNA"/>
</dbReference>
<dbReference type="PIR" id="JQ0424">
    <property type="entry name" value="JQ0424"/>
</dbReference>
<dbReference type="SMR" id="P20189"/>
<dbReference type="GO" id="GO:0003677">
    <property type="term" value="F:DNA binding"/>
    <property type="evidence" value="ECO:0007669"/>
    <property type="project" value="UniProtKB-KW"/>
</dbReference>
<dbReference type="GO" id="GO:0004803">
    <property type="term" value="F:transposase activity"/>
    <property type="evidence" value="ECO:0007669"/>
    <property type="project" value="InterPro"/>
</dbReference>
<dbReference type="GO" id="GO:0006313">
    <property type="term" value="P:DNA transposition"/>
    <property type="evidence" value="ECO:0007669"/>
    <property type="project" value="InterPro"/>
</dbReference>
<dbReference type="InterPro" id="IPR047653">
    <property type="entry name" value="Tn3-like_transpos"/>
</dbReference>
<dbReference type="InterPro" id="IPR002513">
    <property type="entry name" value="Tn3_Tnp_DDE_dom"/>
</dbReference>
<dbReference type="NCBIfam" id="NF033527">
    <property type="entry name" value="transpos_Tn3"/>
    <property type="match status" value="1"/>
</dbReference>
<dbReference type="Pfam" id="PF01526">
    <property type="entry name" value="DDE_Tnp_Tn3"/>
    <property type="match status" value="1"/>
</dbReference>
<gene>
    <name type="primary">tnpA</name>
</gene>
<sequence>MGGRAGLDDGRGAEGVVRRGSRVAEGAAGAAAWGDDADEAGGLGAGSSEPAAVGQPARDAEHRAASGAGLFGWTVPPGERVSELDRLRRGPVRVSGPQMKRALERAEEIAAFGMGAVDVSRIPPRRLAELSRYGVDGKASLLRRHSDARRLATLLATTVYLTSRAVDDALDLLEVLIATKLLARAERESAKEKLKSLPRVERASAKLATAFQVVFDTTSEQVDTDTGEIPPPKVESLEGMWAAIEQVVPRHELAAAIAALFELTPPLDSDADEAWRAMLINRFGTVRPFLKLLVSVVDFDATPEGEAVLGALLSLPELMGRKKVGPAEIDADLLTGSWRRLVLAAPHLEPGTVDWKAYTFCVLEHLHRMLRSKQVFAKNSSKWGDPRAKLLAGQAWQQARPTVLASLNLPGEADGHLAARAALLDGTYREVAARVPDSAQIVFDDDGRLHFAALEPEPEPASLLELRAAVNAMLPRVDLPEVLLEVFSWTGADQAFTSVTAGEARLKDLNVTIAALLVAHGCNVGYTPVMGGADPLKYGRLSHVDQTYLRLATYRAANATLIEHQASIPLAQTWGGGLVASVDGMRFVVPVPSVYARPNPKYFGRRGGATWLNMINDQAAGLGGKVVAGTPRDSLYVLDVLYDRDGGKRPEMIVTDTASYSDIVFGLLTLAGFAYAPQLADLPDQKMWRVDRTADYGAFQDAARGRIDLARIERHWEDILRIIGSIHTGAVRAYDVIRMLSRDGRPTPLGDAIAHYGRIAKTLHILRLADEPGYRRQIKVQANLQEGRHALARKIFHGKQGQLYQRYQDGMEDQIGALGLVLNALVLFNTRYMDAAVNQLRADGFDVRDEDVARLSPFVRHHINMLGRYSFQLPDLPGGLRPLRDKTATDDM</sequence>
<protein>
    <recommendedName>
        <fullName>Transposase for transposon Tn4556</fullName>
    </recommendedName>
</protein>
<feature type="chain" id="PRO_0000075434" description="Transposase for transposon Tn4556">
    <location>
        <begin position="1"/>
        <end position="892"/>
    </location>
</feature>
<feature type="region of interest" description="Disordered" evidence="1">
    <location>
        <begin position="1"/>
        <end position="63"/>
    </location>
</feature>
<feature type="compositionally biased region" description="Basic and acidic residues" evidence="1">
    <location>
        <begin position="1"/>
        <end position="12"/>
    </location>
</feature>
<feature type="compositionally biased region" description="Low complexity" evidence="1">
    <location>
        <begin position="23"/>
        <end position="34"/>
    </location>
</feature>
<name>TNPA_STRFR</name>
<organism>
    <name type="scientific">Streptomyces fradiae</name>
    <name type="common">Streptomyces roseoflavus</name>
    <dbReference type="NCBI Taxonomy" id="1906"/>
    <lineage>
        <taxon>Bacteria</taxon>
        <taxon>Bacillati</taxon>
        <taxon>Actinomycetota</taxon>
        <taxon>Actinomycetes</taxon>
        <taxon>Kitasatosporales</taxon>
        <taxon>Streptomycetaceae</taxon>
        <taxon>Streptomyces</taxon>
    </lineage>
</organism>
<comment type="function">
    <text>Required for transposition of transposon Tn4556.</text>
</comment>
<comment type="similarity">
    <text evidence="2">Belongs to the transposase 7 family.</text>
</comment>
<reference key="1">
    <citation type="journal article" date="1990" name="Gene">
        <title>Nucleotide sequence of Streptomyces fradiae transposable element Tn4556: a class-II transposon related to Tn3.</title>
        <authorList>
            <person name="Siemieniak D.R."/>
            <person name="Slightom J.L."/>
            <person name="Chung S.T."/>
        </authorList>
    </citation>
    <scope>NUCLEOTIDE SEQUENCE [GENOMIC DNA]</scope>
</reference>